<dbReference type="EC" id="1.7.-.-" evidence="1"/>
<dbReference type="EC" id="1.11.1.-" evidence="1"/>
<dbReference type="PIR" id="A02508">
    <property type="entry name" value="MYELA"/>
</dbReference>
<dbReference type="SMR" id="P02187"/>
<dbReference type="FunCoup" id="P02187">
    <property type="interactions" value="32"/>
</dbReference>
<dbReference type="STRING" id="9785.ENSLAFP00000017436"/>
<dbReference type="eggNOG" id="KOG3378">
    <property type="taxonomic scope" value="Eukaryota"/>
</dbReference>
<dbReference type="InParanoid" id="P02187"/>
<dbReference type="Proteomes" id="UP000007646">
    <property type="component" value="Unassembled WGS sequence"/>
</dbReference>
<dbReference type="GO" id="GO:0070062">
    <property type="term" value="C:extracellular exosome"/>
    <property type="evidence" value="ECO:0007669"/>
    <property type="project" value="TreeGrafter"/>
</dbReference>
<dbReference type="GO" id="GO:0016528">
    <property type="term" value="C:sarcoplasm"/>
    <property type="evidence" value="ECO:0000250"/>
    <property type="project" value="UniProtKB"/>
</dbReference>
<dbReference type="GO" id="GO:0020037">
    <property type="term" value="F:heme binding"/>
    <property type="evidence" value="ECO:0007669"/>
    <property type="project" value="InterPro"/>
</dbReference>
<dbReference type="GO" id="GO:0046872">
    <property type="term" value="F:metal ion binding"/>
    <property type="evidence" value="ECO:0007669"/>
    <property type="project" value="UniProtKB-KW"/>
</dbReference>
<dbReference type="GO" id="GO:0098809">
    <property type="term" value="F:nitrite reductase activity"/>
    <property type="evidence" value="ECO:0000250"/>
    <property type="project" value="UniProtKB"/>
</dbReference>
<dbReference type="GO" id="GO:0019825">
    <property type="term" value="F:oxygen binding"/>
    <property type="evidence" value="ECO:0007669"/>
    <property type="project" value="InterPro"/>
</dbReference>
<dbReference type="GO" id="GO:0005344">
    <property type="term" value="F:oxygen carrier activity"/>
    <property type="evidence" value="ECO:0000250"/>
    <property type="project" value="UniProtKB"/>
</dbReference>
<dbReference type="GO" id="GO:0004601">
    <property type="term" value="F:peroxidase activity"/>
    <property type="evidence" value="ECO:0000250"/>
    <property type="project" value="UniProtKB"/>
</dbReference>
<dbReference type="GO" id="GO:0019430">
    <property type="term" value="P:removal of superoxide radicals"/>
    <property type="evidence" value="ECO:0000250"/>
    <property type="project" value="UniProtKB"/>
</dbReference>
<dbReference type="Gene3D" id="6.10.140.2100">
    <property type="match status" value="1"/>
</dbReference>
<dbReference type="Gene3D" id="6.10.140.2110">
    <property type="match status" value="1"/>
</dbReference>
<dbReference type="InterPro" id="IPR000971">
    <property type="entry name" value="Globin"/>
</dbReference>
<dbReference type="InterPro" id="IPR009050">
    <property type="entry name" value="Globin-like_sf"/>
</dbReference>
<dbReference type="InterPro" id="IPR002335">
    <property type="entry name" value="Myoglobin"/>
</dbReference>
<dbReference type="PANTHER" id="PTHR47132">
    <property type="entry name" value="MYOGLOBIN"/>
    <property type="match status" value="1"/>
</dbReference>
<dbReference type="PANTHER" id="PTHR47132:SF1">
    <property type="entry name" value="MYOGLOBIN"/>
    <property type="match status" value="1"/>
</dbReference>
<dbReference type="Pfam" id="PF00042">
    <property type="entry name" value="Globin"/>
    <property type="match status" value="1"/>
</dbReference>
<dbReference type="PRINTS" id="PR00613">
    <property type="entry name" value="MYOGLOBIN"/>
</dbReference>
<dbReference type="SUPFAM" id="SSF46458">
    <property type="entry name" value="Globin-like"/>
    <property type="match status" value="1"/>
</dbReference>
<dbReference type="PROSITE" id="PS01033">
    <property type="entry name" value="GLOBIN"/>
    <property type="match status" value="1"/>
</dbReference>
<organism>
    <name type="scientific">Loxodonta africana</name>
    <name type="common">African elephant</name>
    <dbReference type="NCBI Taxonomy" id="9785"/>
    <lineage>
        <taxon>Eukaryota</taxon>
        <taxon>Metazoa</taxon>
        <taxon>Chordata</taxon>
        <taxon>Craniata</taxon>
        <taxon>Vertebrata</taxon>
        <taxon>Euteleostomi</taxon>
        <taxon>Mammalia</taxon>
        <taxon>Eutheria</taxon>
        <taxon>Afrotheria</taxon>
        <taxon>Proboscidea</taxon>
        <taxon>Elephantidae</taxon>
        <taxon>Loxodonta</taxon>
    </lineage>
</organism>
<keyword id="KW-0963">Cytoplasm</keyword>
<keyword id="KW-0903">Direct protein sequencing</keyword>
<keyword id="KW-0349">Heme</keyword>
<keyword id="KW-0408">Iron</keyword>
<keyword id="KW-0479">Metal-binding</keyword>
<keyword id="KW-0514">Muscle protein</keyword>
<keyword id="KW-0560">Oxidoreductase</keyword>
<keyword id="KW-0561">Oxygen transport</keyword>
<keyword id="KW-0597">Phosphoprotein</keyword>
<keyword id="KW-1185">Reference proteome</keyword>
<keyword id="KW-0813">Transport</keyword>
<feature type="chain" id="PRO_0000053311" description="Myoglobin">
    <location>
        <begin position="1"/>
        <end position="154"/>
    </location>
</feature>
<feature type="domain" description="Globin" evidence="5">
    <location>
        <begin position="2"/>
        <end position="148"/>
    </location>
</feature>
<feature type="binding site" description="proximal binding residue" evidence="1">
    <location>
        <position position="94"/>
    </location>
    <ligand>
        <name>heme b</name>
        <dbReference type="ChEBI" id="CHEBI:60344"/>
    </ligand>
    <ligandPart>
        <name>Fe</name>
        <dbReference type="ChEBI" id="CHEBI:18248"/>
    </ligandPart>
</feature>
<feature type="modified residue" description="Phosphoserine" evidence="4">
    <location>
        <position position="4"/>
    </location>
</feature>
<feature type="modified residue" description="Phosphothreonine" evidence="3">
    <location>
        <position position="68"/>
    </location>
</feature>
<evidence type="ECO:0000250" key="1">
    <source>
        <dbReference type="UniProtKB" id="P02144"/>
    </source>
</evidence>
<evidence type="ECO:0000250" key="2">
    <source>
        <dbReference type="UniProtKB" id="P02185"/>
    </source>
</evidence>
<evidence type="ECO:0000250" key="3">
    <source>
        <dbReference type="UniProtKB" id="P04247"/>
    </source>
</evidence>
<evidence type="ECO:0000250" key="4">
    <source>
        <dbReference type="UniProtKB" id="Q9QZ76"/>
    </source>
</evidence>
<evidence type="ECO:0000255" key="5">
    <source>
        <dbReference type="PROSITE-ProRule" id="PRU00238"/>
    </source>
</evidence>
<name>MYG_LOXAF</name>
<comment type="function">
    <text evidence="1">Monomeric heme protein which primary function is to store oxygen and facilitate its diffusion within muscle tissues. Reversibly binds oxygen through a pentacoordinated heme iron and enables its timely and efficient release as needed during periods of heightened demand. Depending on the oxidative conditions of tissues and cells, and in addition to its ability to bind oxygen, it also has a nitrite reductase activity whereby it regulates the production of bioactive nitric oxide. Under stress conditions, like hypoxia and anoxia, it also protects cells against reactive oxygen species thanks to its pseudoperoxidase activity.</text>
</comment>
<comment type="catalytic activity">
    <reaction evidence="1">
        <text>Fe(III)-heme b-[protein] + nitric oxide + H2O = Fe(II)-heme b-[protein] + nitrite + 2 H(+)</text>
        <dbReference type="Rhea" id="RHEA:77711"/>
        <dbReference type="Rhea" id="RHEA-COMP:18975"/>
        <dbReference type="Rhea" id="RHEA-COMP:18976"/>
        <dbReference type="ChEBI" id="CHEBI:15377"/>
        <dbReference type="ChEBI" id="CHEBI:15378"/>
        <dbReference type="ChEBI" id="CHEBI:16301"/>
        <dbReference type="ChEBI" id="CHEBI:16480"/>
        <dbReference type="ChEBI" id="CHEBI:55376"/>
        <dbReference type="ChEBI" id="CHEBI:60344"/>
    </reaction>
    <physiologicalReaction direction="right-to-left" evidence="1">
        <dbReference type="Rhea" id="RHEA:77713"/>
    </physiologicalReaction>
</comment>
<comment type="catalytic activity">
    <reaction evidence="1">
        <text>H2O2 + AH2 = A + 2 H2O</text>
        <dbReference type="Rhea" id="RHEA:30275"/>
        <dbReference type="ChEBI" id="CHEBI:13193"/>
        <dbReference type="ChEBI" id="CHEBI:15377"/>
        <dbReference type="ChEBI" id="CHEBI:16240"/>
        <dbReference type="ChEBI" id="CHEBI:17499"/>
    </reaction>
</comment>
<comment type="subunit">
    <text evidence="2">Monomeric.</text>
</comment>
<comment type="subcellular location">
    <subcellularLocation>
        <location evidence="1">Cytoplasm</location>
        <location evidence="1">Sarcoplasm</location>
    </subcellularLocation>
</comment>
<comment type="similarity">
    <text evidence="5">Belongs to the globin family.</text>
</comment>
<sequence length="154" mass="17153">MGLSDGEWELVLKTWGKVEADIPGHGEFVLVRLFTGHPETLEKFDKFKHLKTEGEMKASEDLKKQGVTVLTALGGILKKKGHHEAEIQPLAQSHATKHKIPIKYLEFISDAIIHVLQSKHPAEFGADAQAAMKKALELFRNDIAAKYKELGFQG</sequence>
<accession>P02187</accession>
<reference key="1">
    <citation type="journal article" date="1981" name="J. Mol. Evol.">
        <title>An exceptional amino acid replacement on the distal side of the iron atom in proboscidean myoglobin.</title>
        <authorList>
            <person name="Romero-Herrera A.E."/>
            <person name="Goodman M."/>
            <person name="Dene H."/>
            <person name="Bartnicki D.E."/>
            <person name="Mizukami H."/>
        </authorList>
    </citation>
    <scope>PARTIAL PROTEIN SEQUENCE</scope>
</reference>
<proteinExistence type="evidence at protein level"/>
<protein>
    <recommendedName>
        <fullName>Myoglobin</fullName>
    </recommendedName>
    <alternativeName>
        <fullName evidence="1">Nitrite reductase MB</fullName>
        <ecNumber evidence="1">1.7.-.-</ecNumber>
    </alternativeName>
    <alternativeName>
        <fullName evidence="1">Pseudoperoxidase MB</fullName>
        <ecNumber evidence="1">1.11.1.-</ecNumber>
    </alternativeName>
</protein>
<gene>
    <name type="primary">MB</name>
</gene>